<dbReference type="EC" id="1.4.3.5" evidence="1"/>
<dbReference type="EMBL" id="CP000348">
    <property type="protein sequence ID" value="ABJ79548.1"/>
    <property type="molecule type" value="Genomic_DNA"/>
</dbReference>
<dbReference type="RefSeq" id="WP_011670589.1">
    <property type="nucleotide sequence ID" value="NC_008508.1"/>
</dbReference>
<dbReference type="SMR" id="Q04ZE7"/>
<dbReference type="KEGG" id="lbl:LBL_2135"/>
<dbReference type="HOGENOM" id="CLU_032263_2_2_12"/>
<dbReference type="UniPathway" id="UPA01068">
    <property type="reaction ID" value="UER00304"/>
</dbReference>
<dbReference type="UniPathway" id="UPA01068">
    <property type="reaction ID" value="UER00305"/>
</dbReference>
<dbReference type="GO" id="GO:0010181">
    <property type="term" value="F:FMN binding"/>
    <property type="evidence" value="ECO:0007669"/>
    <property type="project" value="UniProtKB-UniRule"/>
</dbReference>
<dbReference type="GO" id="GO:0004733">
    <property type="term" value="F:pyridoxamine phosphate oxidase activity"/>
    <property type="evidence" value="ECO:0007669"/>
    <property type="project" value="UniProtKB-UniRule"/>
</dbReference>
<dbReference type="GO" id="GO:0008615">
    <property type="term" value="P:pyridoxine biosynthetic process"/>
    <property type="evidence" value="ECO:0007669"/>
    <property type="project" value="UniProtKB-KW"/>
</dbReference>
<dbReference type="FunFam" id="2.30.110.10:FF:000005">
    <property type="entry name" value="NAD(P)H-hydrate epimerase"/>
    <property type="match status" value="1"/>
</dbReference>
<dbReference type="Gene3D" id="2.30.110.10">
    <property type="entry name" value="Electron Transport, Fmn-binding Protein, Chain A"/>
    <property type="match status" value="1"/>
</dbReference>
<dbReference type="HAMAP" id="MF_01629">
    <property type="entry name" value="PdxH"/>
    <property type="match status" value="1"/>
</dbReference>
<dbReference type="InterPro" id="IPR000659">
    <property type="entry name" value="Pyridox_Oxase"/>
</dbReference>
<dbReference type="InterPro" id="IPR019740">
    <property type="entry name" value="Pyridox_Oxase_CS"/>
</dbReference>
<dbReference type="InterPro" id="IPR011576">
    <property type="entry name" value="Pyridox_Oxase_N"/>
</dbReference>
<dbReference type="InterPro" id="IPR019576">
    <property type="entry name" value="Pyridoxamine_oxidase_dimer_C"/>
</dbReference>
<dbReference type="InterPro" id="IPR012349">
    <property type="entry name" value="Split_barrel_FMN-bd"/>
</dbReference>
<dbReference type="NCBIfam" id="TIGR00558">
    <property type="entry name" value="pdxH"/>
    <property type="match status" value="1"/>
</dbReference>
<dbReference type="NCBIfam" id="NF004231">
    <property type="entry name" value="PRK05679.1"/>
    <property type="match status" value="1"/>
</dbReference>
<dbReference type="PANTHER" id="PTHR10851:SF0">
    <property type="entry name" value="PYRIDOXINE-5'-PHOSPHATE OXIDASE"/>
    <property type="match status" value="1"/>
</dbReference>
<dbReference type="PANTHER" id="PTHR10851">
    <property type="entry name" value="PYRIDOXINE-5-PHOSPHATE OXIDASE"/>
    <property type="match status" value="1"/>
</dbReference>
<dbReference type="Pfam" id="PF10590">
    <property type="entry name" value="PNP_phzG_C"/>
    <property type="match status" value="1"/>
</dbReference>
<dbReference type="Pfam" id="PF01243">
    <property type="entry name" value="PNPOx_N"/>
    <property type="match status" value="1"/>
</dbReference>
<dbReference type="PIRSF" id="PIRSF000190">
    <property type="entry name" value="Pyd_amn-ph_oxd"/>
    <property type="match status" value="1"/>
</dbReference>
<dbReference type="SUPFAM" id="SSF50475">
    <property type="entry name" value="FMN-binding split barrel"/>
    <property type="match status" value="1"/>
</dbReference>
<dbReference type="PROSITE" id="PS01064">
    <property type="entry name" value="PYRIDOX_OXIDASE"/>
    <property type="match status" value="1"/>
</dbReference>
<evidence type="ECO:0000255" key="1">
    <source>
        <dbReference type="HAMAP-Rule" id="MF_01629"/>
    </source>
</evidence>
<protein>
    <recommendedName>
        <fullName evidence="1">Pyridoxine/pyridoxamine 5'-phosphate oxidase</fullName>
        <ecNumber evidence="1">1.4.3.5</ecNumber>
    </recommendedName>
    <alternativeName>
        <fullName evidence="1">PNP/PMP oxidase</fullName>
        <shortName evidence="1">PNPOx</shortName>
    </alternativeName>
    <alternativeName>
        <fullName evidence="1">Pyridoxal 5'-phosphate synthase</fullName>
    </alternativeName>
</protein>
<name>PDXH_LEPBL</name>
<reference key="1">
    <citation type="journal article" date="2006" name="Proc. Natl. Acad. Sci. U.S.A.">
        <title>Genome reduction in Leptospira borgpetersenii reflects limited transmission potential.</title>
        <authorList>
            <person name="Bulach D.M."/>
            <person name="Zuerner R.L."/>
            <person name="Wilson P."/>
            <person name="Seemann T."/>
            <person name="McGrath A."/>
            <person name="Cullen P.A."/>
            <person name="Davis J."/>
            <person name="Johnson M."/>
            <person name="Kuczek E."/>
            <person name="Alt D.P."/>
            <person name="Peterson-Burch B."/>
            <person name="Coppel R.L."/>
            <person name="Rood J.I."/>
            <person name="Davies J.K."/>
            <person name="Adler B."/>
        </authorList>
    </citation>
    <scope>NUCLEOTIDE SEQUENCE [LARGE SCALE GENOMIC DNA]</scope>
    <source>
        <strain>L550</strain>
    </source>
</reference>
<organism>
    <name type="scientific">Leptospira borgpetersenii serovar Hardjo-bovis (strain L550)</name>
    <dbReference type="NCBI Taxonomy" id="355276"/>
    <lineage>
        <taxon>Bacteria</taxon>
        <taxon>Pseudomonadati</taxon>
        <taxon>Spirochaetota</taxon>
        <taxon>Spirochaetia</taxon>
        <taxon>Leptospirales</taxon>
        <taxon>Leptospiraceae</taxon>
        <taxon>Leptospira</taxon>
    </lineage>
</organism>
<accession>Q04ZE7</accession>
<feature type="chain" id="PRO_0000292300" description="Pyridoxine/pyridoxamine 5'-phosphate oxidase">
    <location>
        <begin position="1"/>
        <end position="214"/>
    </location>
</feature>
<feature type="binding site" evidence="1">
    <location>
        <begin position="9"/>
        <end position="12"/>
    </location>
    <ligand>
        <name>substrate</name>
    </ligand>
</feature>
<feature type="binding site" evidence="1">
    <location>
        <begin position="62"/>
        <end position="67"/>
    </location>
    <ligand>
        <name>FMN</name>
        <dbReference type="ChEBI" id="CHEBI:58210"/>
    </ligand>
</feature>
<feature type="binding site" evidence="1">
    <location>
        <position position="67"/>
    </location>
    <ligand>
        <name>substrate</name>
    </ligand>
</feature>
<feature type="binding site" evidence="1">
    <location>
        <begin position="77"/>
        <end position="78"/>
    </location>
    <ligand>
        <name>FMN</name>
        <dbReference type="ChEBI" id="CHEBI:58210"/>
    </ligand>
</feature>
<feature type="binding site" evidence="1">
    <location>
        <position position="83"/>
    </location>
    <ligand>
        <name>FMN</name>
        <dbReference type="ChEBI" id="CHEBI:58210"/>
    </ligand>
</feature>
<feature type="binding site" evidence="1">
    <location>
        <position position="84"/>
    </location>
    <ligand>
        <name>FMN</name>
        <dbReference type="ChEBI" id="CHEBI:58210"/>
    </ligand>
</feature>
<feature type="binding site" evidence="1">
    <location>
        <position position="106"/>
    </location>
    <ligand>
        <name>FMN</name>
        <dbReference type="ChEBI" id="CHEBI:58210"/>
    </ligand>
</feature>
<feature type="binding site" evidence="1">
    <location>
        <position position="124"/>
    </location>
    <ligand>
        <name>substrate</name>
    </ligand>
</feature>
<feature type="binding site" evidence="1">
    <location>
        <position position="128"/>
    </location>
    <ligand>
        <name>substrate</name>
    </ligand>
</feature>
<feature type="binding site" evidence="1">
    <location>
        <position position="132"/>
    </location>
    <ligand>
        <name>substrate</name>
    </ligand>
</feature>
<feature type="binding site" evidence="1">
    <location>
        <begin position="141"/>
        <end position="142"/>
    </location>
    <ligand>
        <name>FMN</name>
        <dbReference type="ChEBI" id="CHEBI:58210"/>
    </ligand>
</feature>
<feature type="binding site" evidence="1">
    <location>
        <position position="186"/>
    </location>
    <ligand>
        <name>FMN</name>
        <dbReference type="ChEBI" id="CHEBI:58210"/>
    </ligand>
</feature>
<feature type="binding site" evidence="1">
    <location>
        <begin position="192"/>
        <end position="194"/>
    </location>
    <ligand>
        <name>substrate</name>
    </ligand>
</feature>
<feature type="binding site" evidence="1">
    <location>
        <position position="196"/>
    </location>
    <ligand>
        <name>FMN</name>
        <dbReference type="ChEBI" id="CHEBI:58210"/>
    </ligand>
</feature>
<proteinExistence type="inferred from homology"/>
<comment type="function">
    <text evidence="1">Catalyzes the oxidation of either pyridoxine 5'-phosphate (PNP) or pyridoxamine 5'-phosphate (PMP) into pyridoxal 5'-phosphate (PLP).</text>
</comment>
<comment type="catalytic activity">
    <reaction evidence="1">
        <text>pyridoxamine 5'-phosphate + O2 + H2O = pyridoxal 5'-phosphate + H2O2 + NH4(+)</text>
        <dbReference type="Rhea" id="RHEA:15817"/>
        <dbReference type="ChEBI" id="CHEBI:15377"/>
        <dbReference type="ChEBI" id="CHEBI:15379"/>
        <dbReference type="ChEBI" id="CHEBI:16240"/>
        <dbReference type="ChEBI" id="CHEBI:28938"/>
        <dbReference type="ChEBI" id="CHEBI:58451"/>
        <dbReference type="ChEBI" id="CHEBI:597326"/>
        <dbReference type="EC" id="1.4.3.5"/>
    </reaction>
</comment>
<comment type="catalytic activity">
    <reaction evidence="1">
        <text>pyridoxine 5'-phosphate + O2 = pyridoxal 5'-phosphate + H2O2</text>
        <dbReference type="Rhea" id="RHEA:15149"/>
        <dbReference type="ChEBI" id="CHEBI:15379"/>
        <dbReference type="ChEBI" id="CHEBI:16240"/>
        <dbReference type="ChEBI" id="CHEBI:58589"/>
        <dbReference type="ChEBI" id="CHEBI:597326"/>
        <dbReference type="EC" id="1.4.3.5"/>
    </reaction>
</comment>
<comment type="cofactor">
    <cofactor evidence="1">
        <name>FMN</name>
        <dbReference type="ChEBI" id="CHEBI:58210"/>
    </cofactor>
    <text evidence="1">Binds 1 FMN per subunit.</text>
</comment>
<comment type="pathway">
    <text evidence="1">Cofactor metabolism; pyridoxal 5'-phosphate salvage; pyridoxal 5'-phosphate from pyridoxamine 5'-phosphate: step 1/1.</text>
</comment>
<comment type="pathway">
    <text evidence="1">Cofactor metabolism; pyridoxal 5'-phosphate salvage; pyridoxal 5'-phosphate from pyridoxine 5'-phosphate: step 1/1.</text>
</comment>
<comment type="subunit">
    <text evidence="1">Homodimer.</text>
</comment>
<comment type="similarity">
    <text evidence="1">Belongs to the pyridoxamine 5'-phosphate oxidase family.</text>
</comment>
<gene>
    <name evidence="1" type="primary">pdxH</name>
    <name type="ordered locus">LBL_2135</name>
</gene>
<sequence length="214" mass="24950">MNSKISEIRKNYSLSSLDIGDIGDDPISFFQKWFEEAVLSEVLEVNAMTLATATKDGKPNARIVLLKEILEDSFVFYTNYESKKGRELEENPRACLVFFWSELERQVRIEGGVKKVSREESNVYFHSRPRGSQIGAVVSPQSYEIPNRKFLEERFEEFSKLYEGKEVDLPNHWGGYAVHPNRIEFWQGRSSRLHDRIVFEKDTDSSWKKFRVAP</sequence>
<keyword id="KW-0285">Flavoprotein</keyword>
<keyword id="KW-0288">FMN</keyword>
<keyword id="KW-0560">Oxidoreductase</keyword>
<keyword id="KW-0664">Pyridoxine biosynthesis</keyword>